<feature type="chain" id="PRO_0000204970" description="DNA repair protein RecO">
    <location>
        <begin position="1"/>
        <end position="268"/>
    </location>
</feature>
<keyword id="KW-0227">DNA damage</keyword>
<keyword id="KW-0233">DNA recombination</keyword>
<keyword id="KW-0234">DNA repair</keyword>
<keyword id="KW-1185">Reference proteome</keyword>
<comment type="function">
    <text evidence="1">Involved in DNA repair and RecF pathway recombination.</text>
</comment>
<comment type="similarity">
    <text evidence="2">Belongs to the RecO family.</text>
</comment>
<comment type="sequence caution" evidence="2">
    <conflict type="erroneous initiation">
        <sequence resource="EMBL-CDS" id="AAA17158"/>
    </conflict>
</comment>
<reference key="1">
    <citation type="submission" date="1994-03" db="EMBL/GenBank/DDBJ databases">
        <authorList>
            <person name="Robison K."/>
            <person name="Smith D.R."/>
        </authorList>
    </citation>
    <scope>NUCLEOTIDE SEQUENCE [GENOMIC DNA]</scope>
</reference>
<reference key="2">
    <citation type="journal article" date="2001" name="Nature">
        <title>Massive gene decay in the leprosy bacillus.</title>
        <authorList>
            <person name="Cole S.T."/>
            <person name="Eiglmeier K."/>
            <person name="Parkhill J."/>
            <person name="James K.D."/>
            <person name="Thomson N.R."/>
            <person name="Wheeler P.R."/>
            <person name="Honore N."/>
            <person name="Garnier T."/>
            <person name="Churcher C.M."/>
            <person name="Harris D.E."/>
            <person name="Mungall K.L."/>
            <person name="Basham D."/>
            <person name="Brown D."/>
            <person name="Chillingworth T."/>
            <person name="Connor R."/>
            <person name="Davies R.M."/>
            <person name="Devlin K."/>
            <person name="Duthoy S."/>
            <person name="Feltwell T."/>
            <person name="Fraser A."/>
            <person name="Hamlin N."/>
            <person name="Holroyd S."/>
            <person name="Hornsby T."/>
            <person name="Jagels K."/>
            <person name="Lacroix C."/>
            <person name="Maclean J."/>
            <person name="Moule S."/>
            <person name="Murphy L.D."/>
            <person name="Oliver K."/>
            <person name="Quail M.A."/>
            <person name="Rajandream M.A."/>
            <person name="Rutherford K.M."/>
            <person name="Rutter S."/>
            <person name="Seeger K."/>
            <person name="Simon S."/>
            <person name="Simmonds M."/>
            <person name="Skelton J."/>
            <person name="Squares R."/>
            <person name="Squares S."/>
            <person name="Stevens K."/>
            <person name="Taylor K."/>
            <person name="Whitehead S."/>
            <person name="Woodward J.R."/>
            <person name="Barrell B.G."/>
        </authorList>
    </citation>
    <scope>NUCLEOTIDE SEQUENCE [LARGE SCALE GENOMIC DNA]</scope>
    <source>
        <strain>TN</strain>
    </source>
</reference>
<dbReference type="EMBL" id="U00016">
    <property type="protein sequence ID" value="AAA17158.1"/>
    <property type="status" value="ALT_INIT"/>
    <property type="molecule type" value="Genomic_DNA"/>
</dbReference>
<dbReference type="EMBL" id="AL583919">
    <property type="protein sequence ID" value="CAC30141.1"/>
    <property type="molecule type" value="Genomic_DNA"/>
</dbReference>
<dbReference type="PIR" id="A86988">
    <property type="entry name" value="A86988"/>
</dbReference>
<dbReference type="PIR" id="S72590">
    <property type="entry name" value="S72590"/>
</dbReference>
<dbReference type="RefSeq" id="NP_301524.1">
    <property type="nucleotide sequence ID" value="NC_002677.1"/>
</dbReference>
<dbReference type="RefSeq" id="WP_010907848.1">
    <property type="nucleotide sequence ID" value="NC_002677.1"/>
</dbReference>
<dbReference type="SMR" id="Q9CCN0"/>
<dbReference type="STRING" id="272631.gene:17574454"/>
<dbReference type="KEGG" id="mle:ML0633"/>
<dbReference type="PATRIC" id="fig|272631.5.peg.1123"/>
<dbReference type="Leproma" id="ML0633"/>
<dbReference type="eggNOG" id="COG1381">
    <property type="taxonomic scope" value="Bacteria"/>
</dbReference>
<dbReference type="HOGENOM" id="CLU_066632_1_1_11"/>
<dbReference type="OrthoDB" id="9812244at2"/>
<dbReference type="Proteomes" id="UP000000806">
    <property type="component" value="Chromosome"/>
</dbReference>
<dbReference type="GO" id="GO:0043590">
    <property type="term" value="C:bacterial nucleoid"/>
    <property type="evidence" value="ECO:0007669"/>
    <property type="project" value="TreeGrafter"/>
</dbReference>
<dbReference type="GO" id="GO:0006310">
    <property type="term" value="P:DNA recombination"/>
    <property type="evidence" value="ECO:0007669"/>
    <property type="project" value="UniProtKB-UniRule"/>
</dbReference>
<dbReference type="GO" id="GO:0006302">
    <property type="term" value="P:double-strand break repair"/>
    <property type="evidence" value="ECO:0007669"/>
    <property type="project" value="TreeGrafter"/>
</dbReference>
<dbReference type="Gene3D" id="2.40.50.140">
    <property type="entry name" value="Nucleic acid-binding proteins"/>
    <property type="match status" value="1"/>
</dbReference>
<dbReference type="Gene3D" id="1.20.1440.120">
    <property type="entry name" value="Recombination protein O, C-terminal domain"/>
    <property type="match status" value="1"/>
</dbReference>
<dbReference type="HAMAP" id="MF_00201">
    <property type="entry name" value="RecO"/>
    <property type="match status" value="1"/>
</dbReference>
<dbReference type="InterPro" id="IPR037278">
    <property type="entry name" value="ARFGAP/RecO"/>
</dbReference>
<dbReference type="InterPro" id="IPR022572">
    <property type="entry name" value="DNA_rep/recomb_RecO_N"/>
</dbReference>
<dbReference type="InterPro" id="IPR012340">
    <property type="entry name" value="NA-bd_OB-fold"/>
</dbReference>
<dbReference type="InterPro" id="IPR003717">
    <property type="entry name" value="RecO"/>
</dbReference>
<dbReference type="InterPro" id="IPR042242">
    <property type="entry name" value="RecO_C"/>
</dbReference>
<dbReference type="NCBIfam" id="TIGR00613">
    <property type="entry name" value="reco"/>
    <property type="match status" value="1"/>
</dbReference>
<dbReference type="PANTHER" id="PTHR33991">
    <property type="entry name" value="DNA REPAIR PROTEIN RECO"/>
    <property type="match status" value="1"/>
</dbReference>
<dbReference type="PANTHER" id="PTHR33991:SF1">
    <property type="entry name" value="DNA REPAIR PROTEIN RECO"/>
    <property type="match status" value="1"/>
</dbReference>
<dbReference type="Pfam" id="PF02565">
    <property type="entry name" value="RecO_C"/>
    <property type="match status" value="1"/>
</dbReference>
<dbReference type="Pfam" id="PF11967">
    <property type="entry name" value="RecO_N"/>
    <property type="match status" value="1"/>
</dbReference>
<dbReference type="SUPFAM" id="SSF57863">
    <property type="entry name" value="ArfGap/RecO-like zinc finger"/>
    <property type="match status" value="1"/>
</dbReference>
<dbReference type="SUPFAM" id="SSF50249">
    <property type="entry name" value="Nucleic acid-binding proteins"/>
    <property type="match status" value="1"/>
</dbReference>
<organism>
    <name type="scientific">Mycobacterium leprae (strain TN)</name>
    <dbReference type="NCBI Taxonomy" id="272631"/>
    <lineage>
        <taxon>Bacteria</taxon>
        <taxon>Bacillati</taxon>
        <taxon>Actinomycetota</taxon>
        <taxon>Actinomycetes</taxon>
        <taxon>Mycobacteriales</taxon>
        <taxon>Mycobacteriaceae</taxon>
        <taxon>Mycobacterium</taxon>
    </lineage>
</organism>
<name>RECO_MYCLE</name>
<gene>
    <name type="primary">recO</name>
    <name type="ordered locus">ML0633</name>
    <name type="ORF">B1937_F1_25</name>
</gene>
<accession>Q9CCN0</accession>
<accession>Q49754</accession>
<evidence type="ECO:0000250" key="1"/>
<evidence type="ECO:0000305" key="2"/>
<protein>
    <recommendedName>
        <fullName>DNA repair protein RecO</fullName>
    </recommendedName>
    <alternativeName>
        <fullName>Recombination protein O</fullName>
    </alternativeName>
</protein>
<sequence>MRLYRDWALVLRQHNLGEADRIVTLLTRDHGLVRAVAKGVRRTRSKFGARLEPFAYIDAQLHPGRNLDIVTQVVSIDAFATDIVSDYGRYTCGCAMLETAERLAGEERAPAPTLHRLTVSALRAVADGNRPRDLLLDAYLLRAMGIAGWAPALTACARCATPGPHRAFHIAAGGSVCVHCRPAGSTTPPRGVLELMSALHDGDWGTAQQAPQSHRSYASGLVAAHLQWHLERQLKTLPLVERTHQAYQVDRSIAERRAALVRQDMACG</sequence>
<proteinExistence type="inferred from homology"/>